<keyword id="KW-0963">Cytoplasm</keyword>
<keyword id="KW-0227">DNA damage</keyword>
<keyword id="KW-0233">DNA recombination</keyword>
<keyword id="KW-0234">DNA repair</keyword>
<keyword id="KW-0238">DNA-binding</keyword>
<keyword id="KW-0255">Endonuclease</keyword>
<keyword id="KW-0378">Hydrolase</keyword>
<keyword id="KW-0460">Magnesium</keyword>
<keyword id="KW-0479">Metal-binding</keyword>
<keyword id="KW-0540">Nuclease</keyword>
<accession>Q0HIZ3</accession>
<feature type="chain" id="PRO_1000002833" description="Crossover junction endodeoxyribonuclease RuvC">
    <location>
        <begin position="1"/>
        <end position="173"/>
    </location>
</feature>
<feature type="active site" evidence="1">
    <location>
        <position position="8"/>
    </location>
</feature>
<feature type="active site" evidence="1">
    <location>
        <position position="67"/>
    </location>
</feature>
<feature type="active site" evidence="1">
    <location>
        <position position="139"/>
    </location>
</feature>
<feature type="binding site" evidence="1">
    <location>
        <position position="8"/>
    </location>
    <ligand>
        <name>Mg(2+)</name>
        <dbReference type="ChEBI" id="CHEBI:18420"/>
        <label>1</label>
    </ligand>
</feature>
<feature type="binding site" evidence="1">
    <location>
        <position position="67"/>
    </location>
    <ligand>
        <name>Mg(2+)</name>
        <dbReference type="ChEBI" id="CHEBI:18420"/>
        <label>2</label>
    </ligand>
</feature>
<feature type="binding site" evidence="1">
    <location>
        <position position="139"/>
    </location>
    <ligand>
        <name>Mg(2+)</name>
        <dbReference type="ChEBI" id="CHEBI:18420"/>
        <label>1</label>
    </ligand>
</feature>
<protein>
    <recommendedName>
        <fullName evidence="1">Crossover junction endodeoxyribonuclease RuvC</fullName>
        <ecNumber evidence="1">3.1.21.10</ecNumber>
    </recommendedName>
    <alternativeName>
        <fullName evidence="1">Holliday junction nuclease RuvC</fullName>
    </alternativeName>
    <alternativeName>
        <fullName evidence="1">Holliday junction resolvase RuvC</fullName>
    </alternativeName>
</protein>
<name>RUVC_SHESM</name>
<sequence>MAIILGVDPGSRITGYGVIQCQGRQQLYLGSGCIRTSGEDLPLRLKQIFDGISEIIRQYQPDEFAIERVFLAKNADSALKLGQARGAAIVAATVANLPVAEYSATQIKNAVVGTGRAKKEQVQHMIQQLLKLPAAPQADAADALGVAVCHYHTNQSLVALSGRATTRTYGRYR</sequence>
<gene>
    <name evidence="1" type="primary">ruvC</name>
    <name type="ordered locus">Shewmr4_1900</name>
</gene>
<dbReference type="EC" id="3.1.21.10" evidence="1"/>
<dbReference type="EMBL" id="CP000446">
    <property type="protein sequence ID" value="ABI38974.1"/>
    <property type="molecule type" value="Genomic_DNA"/>
</dbReference>
<dbReference type="RefSeq" id="WP_011622671.1">
    <property type="nucleotide sequence ID" value="NC_008321.1"/>
</dbReference>
<dbReference type="SMR" id="Q0HIZ3"/>
<dbReference type="GeneID" id="94727910"/>
<dbReference type="KEGG" id="she:Shewmr4_1900"/>
<dbReference type="HOGENOM" id="CLU_091257_2_1_6"/>
<dbReference type="GO" id="GO:0005737">
    <property type="term" value="C:cytoplasm"/>
    <property type="evidence" value="ECO:0007669"/>
    <property type="project" value="UniProtKB-SubCell"/>
</dbReference>
<dbReference type="GO" id="GO:0048476">
    <property type="term" value="C:Holliday junction resolvase complex"/>
    <property type="evidence" value="ECO:0007669"/>
    <property type="project" value="UniProtKB-UniRule"/>
</dbReference>
<dbReference type="GO" id="GO:0008821">
    <property type="term" value="F:crossover junction DNA endonuclease activity"/>
    <property type="evidence" value="ECO:0007669"/>
    <property type="project" value="UniProtKB-UniRule"/>
</dbReference>
<dbReference type="GO" id="GO:0003677">
    <property type="term" value="F:DNA binding"/>
    <property type="evidence" value="ECO:0007669"/>
    <property type="project" value="UniProtKB-KW"/>
</dbReference>
<dbReference type="GO" id="GO:0000287">
    <property type="term" value="F:magnesium ion binding"/>
    <property type="evidence" value="ECO:0007669"/>
    <property type="project" value="UniProtKB-UniRule"/>
</dbReference>
<dbReference type="GO" id="GO:0006310">
    <property type="term" value="P:DNA recombination"/>
    <property type="evidence" value="ECO:0007669"/>
    <property type="project" value="UniProtKB-UniRule"/>
</dbReference>
<dbReference type="GO" id="GO:0006281">
    <property type="term" value="P:DNA repair"/>
    <property type="evidence" value="ECO:0007669"/>
    <property type="project" value="UniProtKB-UniRule"/>
</dbReference>
<dbReference type="CDD" id="cd16962">
    <property type="entry name" value="RuvC"/>
    <property type="match status" value="1"/>
</dbReference>
<dbReference type="FunFam" id="3.30.420.10:FF:000002">
    <property type="entry name" value="Crossover junction endodeoxyribonuclease RuvC"/>
    <property type="match status" value="1"/>
</dbReference>
<dbReference type="Gene3D" id="3.30.420.10">
    <property type="entry name" value="Ribonuclease H-like superfamily/Ribonuclease H"/>
    <property type="match status" value="1"/>
</dbReference>
<dbReference type="HAMAP" id="MF_00034">
    <property type="entry name" value="RuvC"/>
    <property type="match status" value="1"/>
</dbReference>
<dbReference type="InterPro" id="IPR012337">
    <property type="entry name" value="RNaseH-like_sf"/>
</dbReference>
<dbReference type="InterPro" id="IPR036397">
    <property type="entry name" value="RNaseH_sf"/>
</dbReference>
<dbReference type="InterPro" id="IPR020563">
    <property type="entry name" value="X-over_junc_endoDNase_Mg_BS"/>
</dbReference>
<dbReference type="InterPro" id="IPR002176">
    <property type="entry name" value="X-over_junc_endoDNase_RuvC"/>
</dbReference>
<dbReference type="NCBIfam" id="NF000711">
    <property type="entry name" value="PRK00039.2-1"/>
    <property type="match status" value="1"/>
</dbReference>
<dbReference type="NCBIfam" id="TIGR00228">
    <property type="entry name" value="ruvC"/>
    <property type="match status" value="1"/>
</dbReference>
<dbReference type="PANTHER" id="PTHR30194">
    <property type="entry name" value="CROSSOVER JUNCTION ENDODEOXYRIBONUCLEASE RUVC"/>
    <property type="match status" value="1"/>
</dbReference>
<dbReference type="PANTHER" id="PTHR30194:SF3">
    <property type="entry name" value="CROSSOVER JUNCTION ENDODEOXYRIBONUCLEASE RUVC"/>
    <property type="match status" value="1"/>
</dbReference>
<dbReference type="Pfam" id="PF02075">
    <property type="entry name" value="RuvC"/>
    <property type="match status" value="1"/>
</dbReference>
<dbReference type="PRINTS" id="PR00696">
    <property type="entry name" value="RSOLVASERUVC"/>
</dbReference>
<dbReference type="SUPFAM" id="SSF53098">
    <property type="entry name" value="Ribonuclease H-like"/>
    <property type="match status" value="1"/>
</dbReference>
<dbReference type="PROSITE" id="PS01321">
    <property type="entry name" value="RUVC"/>
    <property type="match status" value="1"/>
</dbReference>
<reference key="1">
    <citation type="submission" date="2006-08" db="EMBL/GenBank/DDBJ databases">
        <title>Complete sequence of Shewanella sp. MR-4.</title>
        <authorList>
            <consortium name="US DOE Joint Genome Institute"/>
            <person name="Copeland A."/>
            <person name="Lucas S."/>
            <person name="Lapidus A."/>
            <person name="Barry K."/>
            <person name="Detter J.C."/>
            <person name="Glavina del Rio T."/>
            <person name="Hammon N."/>
            <person name="Israni S."/>
            <person name="Dalin E."/>
            <person name="Tice H."/>
            <person name="Pitluck S."/>
            <person name="Kiss H."/>
            <person name="Brettin T."/>
            <person name="Bruce D."/>
            <person name="Han C."/>
            <person name="Tapia R."/>
            <person name="Gilna P."/>
            <person name="Schmutz J."/>
            <person name="Larimer F."/>
            <person name="Land M."/>
            <person name="Hauser L."/>
            <person name="Kyrpides N."/>
            <person name="Mikhailova N."/>
            <person name="Nealson K."/>
            <person name="Konstantinidis K."/>
            <person name="Klappenbach J."/>
            <person name="Tiedje J."/>
            <person name="Richardson P."/>
        </authorList>
    </citation>
    <scope>NUCLEOTIDE SEQUENCE [LARGE SCALE GENOMIC DNA]</scope>
    <source>
        <strain>MR-4</strain>
    </source>
</reference>
<organism>
    <name type="scientific">Shewanella sp. (strain MR-4)</name>
    <dbReference type="NCBI Taxonomy" id="60480"/>
    <lineage>
        <taxon>Bacteria</taxon>
        <taxon>Pseudomonadati</taxon>
        <taxon>Pseudomonadota</taxon>
        <taxon>Gammaproteobacteria</taxon>
        <taxon>Alteromonadales</taxon>
        <taxon>Shewanellaceae</taxon>
        <taxon>Shewanella</taxon>
    </lineage>
</organism>
<proteinExistence type="inferred from homology"/>
<evidence type="ECO:0000255" key="1">
    <source>
        <dbReference type="HAMAP-Rule" id="MF_00034"/>
    </source>
</evidence>
<comment type="function">
    <text evidence="1">The RuvA-RuvB-RuvC complex processes Holliday junction (HJ) DNA during genetic recombination and DNA repair. Endonuclease that resolves HJ intermediates. Cleaves cruciform DNA by making single-stranded nicks across the HJ at symmetrical positions within the homologous arms, yielding a 5'-phosphate and a 3'-hydroxyl group; requires a central core of homology in the junction. The consensus cleavage sequence is 5'-(A/T)TT(C/G)-3'. Cleavage occurs on the 3'-side of the TT dinucleotide at the point of strand exchange. HJ branch migration catalyzed by RuvA-RuvB allows RuvC to scan DNA until it finds its consensus sequence, where it cleaves and resolves the cruciform DNA.</text>
</comment>
<comment type="catalytic activity">
    <reaction evidence="1">
        <text>Endonucleolytic cleavage at a junction such as a reciprocal single-stranded crossover between two homologous DNA duplexes (Holliday junction).</text>
        <dbReference type="EC" id="3.1.21.10"/>
    </reaction>
</comment>
<comment type="cofactor">
    <cofactor evidence="1">
        <name>Mg(2+)</name>
        <dbReference type="ChEBI" id="CHEBI:18420"/>
    </cofactor>
    <text evidence="1">Binds 2 Mg(2+) ion per subunit.</text>
</comment>
<comment type="subunit">
    <text evidence="1">Homodimer which binds Holliday junction (HJ) DNA. The HJ becomes 2-fold symmetrical on binding to RuvC with unstacked arms; it has a different conformation from HJ DNA in complex with RuvA. In the full resolvosome a probable DNA-RuvA(4)-RuvB(12)-RuvC(2) complex forms which resolves the HJ.</text>
</comment>
<comment type="subcellular location">
    <subcellularLocation>
        <location evidence="1">Cytoplasm</location>
    </subcellularLocation>
</comment>
<comment type="similarity">
    <text evidence="1">Belongs to the RuvC family.</text>
</comment>